<accession>Q9I2C0</accession>
<comment type="function">
    <text evidence="1">Catalyzes the cross-linking of a glutamate residue and a tyrosine residue in the PqqA protein as part of the biosynthesis of pyrroloquinoline quinone (PQQ).</text>
</comment>
<comment type="catalytic activity">
    <reaction evidence="1">
        <text>[PQQ precursor protein] + S-adenosyl-L-methionine = E-Y cross-linked-[PQQ precursor protein] + 5'-deoxyadenosine + L-methionine + H(+)</text>
        <dbReference type="Rhea" id="RHEA:56836"/>
        <dbReference type="Rhea" id="RHEA-COMP:14800"/>
        <dbReference type="Rhea" id="RHEA-COMP:14801"/>
        <dbReference type="ChEBI" id="CHEBI:15378"/>
        <dbReference type="ChEBI" id="CHEBI:17319"/>
        <dbReference type="ChEBI" id="CHEBI:57844"/>
        <dbReference type="ChEBI" id="CHEBI:59789"/>
        <dbReference type="ChEBI" id="CHEBI:141026"/>
        <dbReference type="ChEBI" id="CHEBI:141027"/>
        <dbReference type="EC" id="1.21.98.4"/>
    </reaction>
</comment>
<comment type="cofactor">
    <cofactor evidence="1">
        <name>[4Fe-4S] cluster</name>
        <dbReference type="ChEBI" id="CHEBI:49883"/>
    </cofactor>
    <text evidence="1">Binds 1 [4Fe-4S] cluster. The cluster is coordinated with 3 cysteines and an exchangeable S-adenosyl-L-methionine.</text>
</comment>
<comment type="pathway">
    <text evidence="1">Cofactor biosynthesis; pyrroloquinoline quinone biosynthesis.</text>
</comment>
<comment type="subunit">
    <text evidence="1">Interacts with PqqD. The interaction is necessary for activity of PqqE.</text>
</comment>
<comment type="similarity">
    <text evidence="1">Belongs to the radical SAM superfamily. PqqE family.</text>
</comment>
<reference key="1">
    <citation type="journal article" date="2000" name="Nature">
        <title>Complete genome sequence of Pseudomonas aeruginosa PAO1, an opportunistic pathogen.</title>
        <authorList>
            <person name="Stover C.K."/>
            <person name="Pham X.-Q.T."/>
            <person name="Erwin A.L."/>
            <person name="Mizoguchi S.D."/>
            <person name="Warrener P."/>
            <person name="Hickey M.J."/>
            <person name="Brinkman F.S.L."/>
            <person name="Hufnagle W.O."/>
            <person name="Kowalik D.J."/>
            <person name="Lagrou M."/>
            <person name="Garber R.L."/>
            <person name="Goltry L."/>
            <person name="Tolentino E."/>
            <person name="Westbrock-Wadman S."/>
            <person name="Yuan Y."/>
            <person name="Brody L.L."/>
            <person name="Coulter S.N."/>
            <person name="Folger K.R."/>
            <person name="Kas A."/>
            <person name="Larbig K."/>
            <person name="Lim R.M."/>
            <person name="Smith K.A."/>
            <person name="Spencer D.H."/>
            <person name="Wong G.K.-S."/>
            <person name="Wu Z."/>
            <person name="Paulsen I.T."/>
            <person name="Reizer J."/>
            <person name="Saier M.H. Jr."/>
            <person name="Hancock R.E.W."/>
            <person name="Lory S."/>
            <person name="Olson M.V."/>
        </authorList>
    </citation>
    <scope>NUCLEOTIDE SEQUENCE [LARGE SCALE GENOMIC DNA]</scope>
    <source>
        <strain>ATCC 15692 / DSM 22644 / CIP 104116 / JCM 14847 / LMG 12228 / 1C / PRS 101 / PAO1</strain>
    </source>
</reference>
<keyword id="KW-0004">4Fe-4S</keyword>
<keyword id="KW-0408">Iron</keyword>
<keyword id="KW-0411">Iron-sulfur</keyword>
<keyword id="KW-0479">Metal-binding</keyword>
<keyword id="KW-0560">Oxidoreductase</keyword>
<keyword id="KW-0884">PQQ biosynthesis</keyword>
<keyword id="KW-1185">Reference proteome</keyword>
<keyword id="KW-0949">S-adenosyl-L-methionine</keyword>
<gene>
    <name evidence="1" type="primary">pqqE</name>
    <name type="ordered locus">PA1989</name>
</gene>
<feature type="chain" id="PRO_0000219943" description="PqqA peptide cyclase">
    <location>
        <begin position="1"/>
        <end position="381"/>
    </location>
</feature>
<feature type="domain" description="Radical SAM core" evidence="2">
    <location>
        <begin position="12"/>
        <end position="228"/>
    </location>
</feature>
<feature type="binding site" evidence="1">
    <location>
        <position position="26"/>
    </location>
    <ligand>
        <name>[4Fe-4S] cluster</name>
        <dbReference type="ChEBI" id="CHEBI:49883"/>
        <note>4Fe-4S-S-AdoMet</note>
    </ligand>
</feature>
<feature type="binding site" evidence="1">
    <location>
        <position position="30"/>
    </location>
    <ligand>
        <name>[4Fe-4S] cluster</name>
        <dbReference type="ChEBI" id="CHEBI:49883"/>
        <note>4Fe-4S-S-AdoMet</note>
    </ligand>
</feature>
<feature type="binding site" evidence="1">
    <location>
        <position position="33"/>
    </location>
    <ligand>
        <name>[4Fe-4S] cluster</name>
        <dbReference type="ChEBI" id="CHEBI:49883"/>
        <note>4Fe-4S-S-AdoMet</note>
    </ligand>
</feature>
<protein>
    <recommendedName>
        <fullName evidence="1">PqqA peptide cyclase</fullName>
        <ecNumber evidence="1">1.21.98.4</ecNumber>
    </recommendedName>
    <alternativeName>
        <fullName evidence="1">Coenzyme PQQ synthesis protein E</fullName>
    </alternativeName>
    <alternativeName>
        <fullName evidence="1">Pyrroloquinoline quinone biosynthesis protein E</fullName>
    </alternativeName>
</protein>
<dbReference type="EC" id="1.21.98.4" evidence="1"/>
<dbReference type="EMBL" id="AE004091">
    <property type="protein sequence ID" value="AAG05377.1"/>
    <property type="molecule type" value="Genomic_DNA"/>
</dbReference>
<dbReference type="PIR" id="E83397">
    <property type="entry name" value="E83397"/>
</dbReference>
<dbReference type="RefSeq" id="NP_250679.1">
    <property type="nucleotide sequence ID" value="NC_002516.2"/>
</dbReference>
<dbReference type="RefSeq" id="WP_003119136.1">
    <property type="nucleotide sequence ID" value="NZ_QZGE01000026.1"/>
</dbReference>
<dbReference type="SMR" id="Q9I2C0"/>
<dbReference type="STRING" id="208964.PA1989"/>
<dbReference type="PaxDb" id="208964-PA1989"/>
<dbReference type="DNASU" id="880128"/>
<dbReference type="GeneID" id="880128"/>
<dbReference type="KEGG" id="pae:PA1989"/>
<dbReference type="PATRIC" id="fig|208964.12.peg.2073"/>
<dbReference type="PseudoCAP" id="PA1989"/>
<dbReference type="HOGENOM" id="CLU_009273_4_7_6"/>
<dbReference type="InParanoid" id="Q9I2C0"/>
<dbReference type="OrthoDB" id="9792276at2"/>
<dbReference type="PhylomeDB" id="Q9I2C0"/>
<dbReference type="BioCyc" id="PAER208964:G1FZ6-2027-MONOMER"/>
<dbReference type="UniPathway" id="UPA00539"/>
<dbReference type="Proteomes" id="UP000002438">
    <property type="component" value="Chromosome"/>
</dbReference>
<dbReference type="GO" id="GO:0051539">
    <property type="term" value="F:4 iron, 4 sulfur cluster binding"/>
    <property type="evidence" value="ECO:0007669"/>
    <property type="project" value="UniProtKB-KW"/>
</dbReference>
<dbReference type="GO" id="GO:0009975">
    <property type="term" value="F:cyclase activity"/>
    <property type="evidence" value="ECO:0007669"/>
    <property type="project" value="UniProtKB-UniRule"/>
</dbReference>
<dbReference type="GO" id="GO:0005506">
    <property type="term" value="F:iron ion binding"/>
    <property type="evidence" value="ECO:0007669"/>
    <property type="project" value="UniProtKB-UniRule"/>
</dbReference>
<dbReference type="GO" id="GO:0016491">
    <property type="term" value="F:oxidoreductase activity"/>
    <property type="evidence" value="ECO:0007669"/>
    <property type="project" value="UniProtKB-KW"/>
</dbReference>
<dbReference type="GO" id="GO:1904047">
    <property type="term" value="F:S-adenosyl-L-methionine binding"/>
    <property type="evidence" value="ECO:0007669"/>
    <property type="project" value="UniProtKB-UniRule"/>
</dbReference>
<dbReference type="GO" id="GO:0018189">
    <property type="term" value="P:pyrroloquinoline quinone biosynthetic process"/>
    <property type="evidence" value="ECO:0007669"/>
    <property type="project" value="UniProtKB-UniRule"/>
</dbReference>
<dbReference type="CDD" id="cd01335">
    <property type="entry name" value="Radical_SAM"/>
    <property type="match status" value="1"/>
</dbReference>
<dbReference type="CDD" id="cd21119">
    <property type="entry name" value="SPASM_PqqE"/>
    <property type="match status" value="1"/>
</dbReference>
<dbReference type="Gene3D" id="3.20.20.70">
    <property type="entry name" value="Aldolase class I"/>
    <property type="match status" value="1"/>
</dbReference>
<dbReference type="HAMAP" id="MF_00660">
    <property type="entry name" value="PqqE"/>
    <property type="match status" value="1"/>
</dbReference>
<dbReference type="InterPro" id="IPR023885">
    <property type="entry name" value="4Fe4S-binding_SPASM_dom"/>
</dbReference>
<dbReference type="InterPro" id="IPR013785">
    <property type="entry name" value="Aldolase_TIM"/>
</dbReference>
<dbReference type="InterPro" id="IPR006638">
    <property type="entry name" value="Elp3/MiaA/NifB-like_rSAM"/>
</dbReference>
<dbReference type="InterPro" id="IPR000385">
    <property type="entry name" value="MoaA_NifB_PqqE_Fe-S-bd_CS"/>
</dbReference>
<dbReference type="InterPro" id="IPR011843">
    <property type="entry name" value="PQQ_synth_PqqE_bac"/>
</dbReference>
<dbReference type="InterPro" id="IPR017200">
    <property type="entry name" value="PqqE-like"/>
</dbReference>
<dbReference type="InterPro" id="IPR050377">
    <property type="entry name" value="Radical_SAM_PqqE_MftC-like"/>
</dbReference>
<dbReference type="InterPro" id="IPR007197">
    <property type="entry name" value="rSAM"/>
</dbReference>
<dbReference type="NCBIfam" id="TIGR02109">
    <property type="entry name" value="PQQ_syn_pqqE"/>
    <property type="match status" value="1"/>
</dbReference>
<dbReference type="NCBIfam" id="TIGR04085">
    <property type="entry name" value="rSAM_more_4Fe4S"/>
    <property type="match status" value="1"/>
</dbReference>
<dbReference type="PANTHER" id="PTHR11228:SF7">
    <property type="entry name" value="PQQA PEPTIDE CYCLASE"/>
    <property type="match status" value="1"/>
</dbReference>
<dbReference type="PANTHER" id="PTHR11228">
    <property type="entry name" value="RADICAL SAM DOMAIN PROTEIN"/>
    <property type="match status" value="1"/>
</dbReference>
<dbReference type="Pfam" id="PF13353">
    <property type="entry name" value="Fer4_12"/>
    <property type="match status" value="1"/>
</dbReference>
<dbReference type="Pfam" id="PF04055">
    <property type="entry name" value="Radical_SAM"/>
    <property type="match status" value="1"/>
</dbReference>
<dbReference type="Pfam" id="PF13186">
    <property type="entry name" value="SPASM"/>
    <property type="match status" value="1"/>
</dbReference>
<dbReference type="PIRSF" id="PIRSF037420">
    <property type="entry name" value="PQQ_syn_pqqE"/>
    <property type="match status" value="1"/>
</dbReference>
<dbReference type="SFLD" id="SFLDF00280">
    <property type="entry name" value="coenzyme_PQQ_synthesis_protein"/>
    <property type="match status" value="1"/>
</dbReference>
<dbReference type="SFLD" id="SFLDG01386">
    <property type="entry name" value="main_SPASM_domain-containing"/>
    <property type="match status" value="1"/>
</dbReference>
<dbReference type="SMART" id="SM00729">
    <property type="entry name" value="Elp3"/>
    <property type="match status" value="1"/>
</dbReference>
<dbReference type="SUPFAM" id="SSF102114">
    <property type="entry name" value="Radical SAM enzymes"/>
    <property type="match status" value="1"/>
</dbReference>
<dbReference type="PROSITE" id="PS01305">
    <property type="entry name" value="MOAA_NIFB_PQQE"/>
    <property type="match status" value="1"/>
</dbReference>
<dbReference type="PROSITE" id="PS51918">
    <property type="entry name" value="RADICAL_SAM"/>
    <property type="match status" value="1"/>
</dbReference>
<organism>
    <name type="scientific">Pseudomonas aeruginosa (strain ATCC 15692 / DSM 22644 / CIP 104116 / JCM 14847 / LMG 12228 / 1C / PRS 101 / PAO1)</name>
    <dbReference type="NCBI Taxonomy" id="208964"/>
    <lineage>
        <taxon>Bacteria</taxon>
        <taxon>Pseudomonadati</taxon>
        <taxon>Pseudomonadota</taxon>
        <taxon>Gammaproteobacteria</taxon>
        <taxon>Pseudomonadales</taxon>
        <taxon>Pseudomonadaceae</taxon>
        <taxon>Pseudomonas</taxon>
    </lineage>
</organism>
<proteinExistence type="inferred from homology"/>
<name>PQQE_PSEAE</name>
<evidence type="ECO:0000255" key="1">
    <source>
        <dbReference type="HAMAP-Rule" id="MF_00660"/>
    </source>
</evidence>
<evidence type="ECO:0000255" key="2">
    <source>
        <dbReference type="PROSITE-ProRule" id="PRU01266"/>
    </source>
</evidence>
<sequence>MRNSGSSCSESVGPPLWLLAELTYRCPLQCPYCSNPLEFAREGAELSTAEWIEVFRQARELGAAQLGFSGGEPLLRQDLAELIEAGRGLGFYTNLITSGIGLDEARLARFAEAGLDHVQISFQAADEEVNNLLAGSRKAFAQKLAMARAVKAHGYPMVLNFVTHRHNIDNIERIIQLCIELEADYVELATCQFYGWAALNRAGLLPTRAQLERAERITAEYRQRLAAEGNPCKLIFVTPDYYEERPKACMGGWASVFLDITPDGTALPCHSARQLPVQFPNVREHSLRHIWYESFGFNRYRGDAWMPEPCRSCEEKERDHGGCRCQAFLLTGDADATDPVCAKSARHDLILAARRQAEEAPLGLDALTWRNQRASRLICKA</sequence>